<comment type="function">
    <text evidence="1">Catalyzes the phosphorylation of methylthioribose into methylthioribose-1-phosphate.</text>
</comment>
<comment type="catalytic activity">
    <reaction evidence="1">
        <text>5-(methylsulfanyl)-D-ribose + ATP = 5-(methylsulfanyl)-alpha-D-ribose 1-phosphate + ADP + H(+)</text>
        <dbReference type="Rhea" id="RHEA:22312"/>
        <dbReference type="ChEBI" id="CHEBI:15378"/>
        <dbReference type="ChEBI" id="CHEBI:30616"/>
        <dbReference type="ChEBI" id="CHEBI:58533"/>
        <dbReference type="ChEBI" id="CHEBI:78440"/>
        <dbReference type="ChEBI" id="CHEBI:456216"/>
        <dbReference type="EC" id="2.7.1.100"/>
    </reaction>
</comment>
<comment type="pathway">
    <text evidence="1">Amino-acid biosynthesis; L-methionine biosynthesis via salvage pathway; S-methyl-5-thio-alpha-D-ribose 1-phosphate from S-methyl-5'-thioadenosine (hydrolase route): step 2/2.</text>
</comment>
<comment type="subunit">
    <text evidence="1">Homodimer.</text>
</comment>
<comment type="similarity">
    <text evidence="1">Belongs to the methylthioribose kinase family.</text>
</comment>
<feature type="chain" id="PRO_1000187398" description="Methylthioribose kinase">
    <location>
        <begin position="1"/>
        <end position="393"/>
    </location>
</feature>
<feature type="binding site" evidence="1">
    <location>
        <position position="38"/>
    </location>
    <ligand>
        <name>ATP</name>
        <dbReference type="ChEBI" id="CHEBI:30616"/>
    </ligand>
</feature>
<feature type="binding site" evidence="1">
    <location>
        <position position="53"/>
    </location>
    <ligand>
        <name>ATP</name>
        <dbReference type="ChEBI" id="CHEBI:30616"/>
    </ligand>
</feature>
<feature type="binding site" evidence="1">
    <location>
        <begin position="107"/>
        <end position="109"/>
    </location>
    <ligand>
        <name>ATP</name>
        <dbReference type="ChEBI" id="CHEBI:30616"/>
    </ligand>
</feature>
<feature type="binding site" evidence="1">
    <location>
        <position position="225"/>
    </location>
    <ligand>
        <name>substrate</name>
    </ligand>
</feature>
<feature type="binding site" evidence="1">
    <location>
        <begin position="242"/>
        <end position="244"/>
    </location>
    <ligand>
        <name>ATP</name>
        <dbReference type="ChEBI" id="CHEBI:30616"/>
    </ligand>
</feature>
<feature type="binding site" evidence="1">
    <location>
        <position position="332"/>
    </location>
    <ligand>
        <name>substrate</name>
    </ligand>
</feature>
<keyword id="KW-0028">Amino-acid biosynthesis</keyword>
<keyword id="KW-0067">ATP-binding</keyword>
<keyword id="KW-0418">Kinase</keyword>
<keyword id="KW-0486">Methionine biosynthesis</keyword>
<keyword id="KW-0547">Nucleotide-binding</keyword>
<keyword id="KW-0808">Transferase</keyword>
<sequence>MGYYSLTEVTAVQYAKEHGYFEKKANVVCHEIGDGNLNYVFKLDDGEKSIIIKQALPYAKVVGESWPLSIKRATIESKALQIFAKYVPEYVPVVYSHDEELAVTVIEDLSRLTITRKGLIDGEEYPLLSQHIGHFLANVLFYTSDFGLQSEEKRVLEGTFVNPDLCKITEDLVFTDPFGHYDTNDYEPELQLTIDELWSDKTLKLKVAQYKYKFLTRKEALIHGDLHTGSIFSSPSETKVIDPEFATYGPFGFDIGQLIANLLLNALSREEEQRGVLFFHIEKTWSYFVETFTKLWIGEGVEAYTKEKQWLPIILQNIFTDAVGFAGCELIRRTIGLAHVADLDEITNKETRIQAKKQALSLGKELIKYESKNADIQLFRTLFQQTVSGGIKA</sequence>
<gene>
    <name evidence="1" type="primary">mtnK</name>
    <name type="ordered locus">BCAH820_4054</name>
</gene>
<protein>
    <recommendedName>
        <fullName evidence="1">Methylthioribose kinase</fullName>
        <shortName evidence="1">MTR kinase</shortName>
        <ecNumber evidence="1">2.7.1.100</ecNumber>
    </recommendedName>
</protein>
<dbReference type="EC" id="2.7.1.100" evidence="1"/>
<dbReference type="EMBL" id="CP001283">
    <property type="protein sequence ID" value="ACK91031.1"/>
    <property type="molecule type" value="Genomic_DNA"/>
</dbReference>
<dbReference type="RefSeq" id="WP_000542709.1">
    <property type="nucleotide sequence ID" value="NC_011773.1"/>
</dbReference>
<dbReference type="SMR" id="B7JL13"/>
<dbReference type="KEGG" id="bcu:BCAH820_4054"/>
<dbReference type="HOGENOM" id="CLU_033681_0_0_9"/>
<dbReference type="UniPathway" id="UPA00904">
    <property type="reaction ID" value="UER00872"/>
</dbReference>
<dbReference type="Proteomes" id="UP000001363">
    <property type="component" value="Chromosome"/>
</dbReference>
<dbReference type="GO" id="GO:0005524">
    <property type="term" value="F:ATP binding"/>
    <property type="evidence" value="ECO:0007669"/>
    <property type="project" value="UniProtKB-UniRule"/>
</dbReference>
<dbReference type="GO" id="GO:0046522">
    <property type="term" value="F:S-methyl-5-thioribose kinase activity"/>
    <property type="evidence" value="ECO:0007669"/>
    <property type="project" value="UniProtKB-UniRule"/>
</dbReference>
<dbReference type="GO" id="GO:0019509">
    <property type="term" value="P:L-methionine salvage from methylthioadenosine"/>
    <property type="evidence" value="ECO:0007669"/>
    <property type="project" value="UniProtKB-UniRule"/>
</dbReference>
<dbReference type="FunFam" id="3.30.200.20:FF:000436">
    <property type="entry name" value="Methylthioribose kinase"/>
    <property type="match status" value="1"/>
</dbReference>
<dbReference type="FunFam" id="3.90.1200.10:FF:000008">
    <property type="entry name" value="Methylthioribose kinase"/>
    <property type="match status" value="1"/>
</dbReference>
<dbReference type="Gene3D" id="3.90.1200.10">
    <property type="match status" value="1"/>
</dbReference>
<dbReference type="Gene3D" id="3.30.200.20">
    <property type="entry name" value="Phosphorylase Kinase, domain 1"/>
    <property type="match status" value="1"/>
</dbReference>
<dbReference type="HAMAP" id="MF_01683">
    <property type="entry name" value="Salvage_MtnK"/>
    <property type="match status" value="1"/>
</dbReference>
<dbReference type="InterPro" id="IPR002575">
    <property type="entry name" value="Aminoglycoside_PTrfase"/>
</dbReference>
<dbReference type="InterPro" id="IPR011009">
    <property type="entry name" value="Kinase-like_dom_sf"/>
</dbReference>
<dbReference type="InterPro" id="IPR009212">
    <property type="entry name" value="Methylthioribose_kinase"/>
</dbReference>
<dbReference type="NCBIfam" id="TIGR01767">
    <property type="entry name" value="MTRK"/>
    <property type="match status" value="1"/>
</dbReference>
<dbReference type="PANTHER" id="PTHR34273">
    <property type="entry name" value="METHYLTHIORIBOSE KINASE"/>
    <property type="match status" value="1"/>
</dbReference>
<dbReference type="PANTHER" id="PTHR34273:SF2">
    <property type="entry name" value="METHYLTHIORIBOSE KINASE"/>
    <property type="match status" value="1"/>
</dbReference>
<dbReference type="Pfam" id="PF01636">
    <property type="entry name" value="APH"/>
    <property type="match status" value="1"/>
</dbReference>
<dbReference type="PIRSF" id="PIRSF031134">
    <property type="entry name" value="MTRK"/>
    <property type="match status" value="1"/>
</dbReference>
<dbReference type="SUPFAM" id="SSF56112">
    <property type="entry name" value="Protein kinase-like (PK-like)"/>
    <property type="match status" value="1"/>
</dbReference>
<organism>
    <name type="scientific">Bacillus cereus (strain AH820)</name>
    <dbReference type="NCBI Taxonomy" id="405535"/>
    <lineage>
        <taxon>Bacteria</taxon>
        <taxon>Bacillati</taxon>
        <taxon>Bacillota</taxon>
        <taxon>Bacilli</taxon>
        <taxon>Bacillales</taxon>
        <taxon>Bacillaceae</taxon>
        <taxon>Bacillus</taxon>
        <taxon>Bacillus cereus group</taxon>
    </lineage>
</organism>
<reference key="1">
    <citation type="submission" date="2008-10" db="EMBL/GenBank/DDBJ databases">
        <title>Genome sequence of Bacillus cereus AH820.</title>
        <authorList>
            <person name="Dodson R.J."/>
            <person name="Durkin A.S."/>
            <person name="Rosovitz M.J."/>
            <person name="Rasko D.A."/>
            <person name="Hoffmaster A."/>
            <person name="Ravel J."/>
            <person name="Sutton G."/>
        </authorList>
    </citation>
    <scope>NUCLEOTIDE SEQUENCE [LARGE SCALE GENOMIC DNA]</scope>
    <source>
        <strain>AH820</strain>
    </source>
</reference>
<accession>B7JL13</accession>
<proteinExistence type="inferred from homology"/>
<evidence type="ECO:0000255" key="1">
    <source>
        <dbReference type="HAMAP-Rule" id="MF_01683"/>
    </source>
</evidence>
<name>MTNK_BACC0</name>